<evidence type="ECO:0000255" key="1">
    <source>
        <dbReference type="HAMAP-Rule" id="MF_01023"/>
    </source>
</evidence>
<protein>
    <recommendedName>
        <fullName evidence="1">Histidinol-phosphate aminotransferase</fullName>
        <ecNumber evidence="1">2.6.1.9</ecNumber>
    </recommendedName>
    <alternativeName>
        <fullName evidence="1">Imidazole acetol-phosphate transaminase</fullName>
    </alternativeName>
</protein>
<keyword id="KW-0028">Amino-acid biosynthesis</keyword>
<keyword id="KW-0032">Aminotransferase</keyword>
<keyword id="KW-0368">Histidine biosynthesis</keyword>
<keyword id="KW-0663">Pyridoxal phosphate</keyword>
<keyword id="KW-1185">Reference proteome</keyword>
<keyword id="KW-0808">Transferase</keyword>
<accession>Q3B3L3</accession>
<feature type="chain" id="PRO_0000230219" description="Histidinol-phosphate aminotransferase">
    <location>
        <begin position="1"/>
        <end position="357"/>
    </location>
</feature>
<feature type="modified residue" description="N6-(pyridoxal phosphate)lysine" evidence="1">
    <location>
        <position position="218"/>
    </location>
</feature>
<reference key="1">
    <citation type="submission" date="2005-08" db="EMBL/GenBank/DDBJ databases">
        <title>Complete sequence of Pelodictyon luteolum DSM 273.</title>
        <authorList>
            <consortium name="US DOE Joint Genome Institute"/>
            <person name="Copeland A."/>
            <person name="Lucas S."/>
            <person name="Lapidus A."/>
            <person name="Barry K."/>
            <person name="Detter J.C."/>
            <person name="Glavina T."/>
            <person name="Hammon N."/>
            <person name="Israni S."/>
            <person name="Pitluck S."/>
            <person name="Bryant D."/>
            <person name="Schmutz J."/>
            <person name="Larimer F."/>
            <person name="Land M."/>
            <person name="Kyrpides N."/>
            <person name="Ivanova N."/>
            <person name="Richardson P."/>
        </authorList>
    </citation>
    <scope>NUCLEOTIDE SEQUENCE [LARGE SCALE GENOMIC DNA]</scope>
    <source>
        <strain>DSM 273 / BCRC 81028 / 2530</strain>
    </source>
</reference>
<sequence>MQNDIHRHLNPALQKIGAYVVEGGQEAPVKLNQNESPFDVPMWLKEAITREFVREPWNRYPDILPYRGIEAYAEFLGVPAGRVIMGNGSNELLYTIFMACLGPGRRILIPEPSFSLYEKIALLMQADIVSVPMRRGLDFDADLILERAKAEAVDLIVLSTPNNPTGKSLSPDDIRRIATESGAIVLVDEAYIEFSRHPSALPLVDELPNVVILRTMSKALALAGMRIGFAIAPEALMAELTKPKIPFASNRLAEITLRHVLANYSIVKDSVSYILDERERMYSELEGMDGLQPFMSDTNFLIIRVADPRAVFQHLRGEGILVRNVSGYPLMEGCLRCNIGLRDENRRLLDGLSRALR</sequence>
<gene>
    <name evidence="1" type="primary">hisC</name>
    <name type="ordered locus">Plut_1206</name>
</gene>
<comment type="catalytic activity">
    <reaction evidence="1">
        <text>L-histidinol phosphate + 2-oxoglutarate = 3-(imidazol-4-yl)-2-oxopropyl phosphate + L-glutamate</text>
        <dbReference type="Rhea" id="RHEA:23744"/>
        <dbReference type="ChEBI" id="CHEBI:16810"/>
        <dbReference type="ChEBI" id="CHEBI:29985"/>
        <dbReference type="ChEBI" id="CHEBI:57766"/>
        <dbReference type="ChEBI" id="CHEBI:57980"/>
        <dbReference type="EC" id="2.6.1.9"/>
    </reaction>
</comment>
<comment type="cofactor">
    <cofactor evidence="1">
        <name>pyridoxal 5'-phosphate</name>
        <dbReference type="ChEBI" id="CHEBI:597326"/>
    </cofactor>
</comment>
<comment type="pathway">
    <text evidence="1">Amino-acid biosynthesis; L-histidine biosynthesis; L-histidine from 5-phospho-alpha-D-ribose 1-diphosphate: step 7/9.</text>
</comment>
<comment type="subunit">
    <text evidence="1">Homodimer.</text>
</comment>
<comment type="similarity">
    <text evidence="1">Belongs to the class-II pyridoxal-phosphate-dependent aminotransferase family. Histidinol-phosphate aminotransferase subfamily.</text>
</comment>
<dbReference type="EC" id="2.6.1.9" evidence="1"/>
<dbReference type="EMBL" id="CP000096">
    <property type="protein sequence ID" value="ABB24068.1"/>
    <property type="molecule type" value="Genomic_DNA"/>
</dbReference>
<dbReference type="RefSeq" id="WP_011357940.1">
    <property type="nucleotide sequence ID" value="NC_007512.1"/>
</dbReference>
<dbReference type="SMR" id="Q3B3L3"/>
<dbReference type="STRING" id="319225.Plut_1206"/>
<dbReference type="KEGG" id="plt:Plut_1206"/>
<dbReference type="eggNOG" id="COG0079">
    <property type="taxonomic scope" value="Bacteria"/>
</dbReference>
<dbReference type="HOGENOM" id="CLU_017584_3_1_10"/>
<dbReference type="OrthoDB" id="9813612at2"/>
<dbReference type="UniPathway" id="UPA00031">
    <property type="reaction ID" value="UER00012"/>
</dbReference>
<dbReference type="Proteomes" id="UP000002709">
    <property type="component" value="Chromosome"/>
</dbReference>
<dbReference type="GO" id="GO:0004400">
    <property type="term" value="F:histidinol-phosphate transaminase activity"/>
    <property type="evidence" value="ECO:0007669"/>
    <property type="project" value="UniProtKB-UniRule"/>
</dbReference>
<dbReference type="GO" id="GO:0030170">
    <property type="term" value="F:pyridoxal phosphate binding"/>
    <property type="evidence" value="ECO:0007669"/>
    <property type="project" value="InterPro"/>
</dbReference>
<dbReference type="GO" id="GO:0000105">
    <property type="term" value="P:L-histidine biosynthetic process"/>
    <property type="evidence" value="ECO:0007669"/>
    <property type="project" value="UniProtKB-UniRule"/>
</dbReference>
<dbReference type="CDD" id="cd00609">
    <property type="entry name" value="AAT_like"/>
    <property type="match status" value="1"/>
</dbReference>
<dbReference type="Gene3D" id="3.90.1150.10">
    <property type="entry name" value="Aspartate Aminotransferase, domain 1"/>
    <property type="match status" value="1"/>
</dbReference>
<dbReference type="Gene3D" id="3.40.640.10">
    <property type="entry name" value="Type I PLP-dependent aspartate aminotransferase-like (Major domain)"/>
    <property type="match status" value="1"/>
</dbReference>
<dbReference type="HAMAP" id="MF_01023">
    <property type="entry name" value="HisC_aminotrans_2"/>
    <property type="match status" value="1"/>
</dbReference>
<dbReference type="InterPro" id="IPR001917">
    <property type="entry name" value="Aminotrans_II_pyridoxalP_BS"/>
</dbReference>
<dbReference type="InterPro" id="IPR004839">
    <property type="entry name" value="Aminotransferase_I/II_large"/>
</dbReference>
<dbReference type="InterPro" id="IPR005861">
    <property type="entry name" value="HisP_aminotrans"/>
</dbReference>
<dbReference type="InterPro" id="IPR015424">
    <property type="entry name" value="PyrdxlP-dep_Trfase"/>
</dbReference>
<dbReference type="InterPro" id="IPR015421">
    <property type="entry name" value="PyrdxlP-dep_Trfase_major"/>
</dbReference>
<dbReference type="InterPro" id="IPR015422">
    <property type="entry name" value="PyrdxlP-dep_Trfase_small"/>
</dbReference>
<dbReference type="NCBIfam" id="TIGR01141">
    <property type="entry name" value="hisC"/>
    <property type="match status" value="1"/>
</dbReference>
<dbReference type="PANTHER" id="PTHR42885:SF2">
    <property type="entry name" value="HISTIDINOL-PHOSPHATE AMINOTRANSFERASE"/>
    <property type="match status" value="1"/>
</dbReference>
<dbReference type="PANTHER" id="PTHR42885">
    <property type="entry name" value="HISTIDINOL-PHOSPHATE AMINOTRANSFERASE-RELATED"/>
    <property type="match status" value="1"/>
</dbReference>
<dbReference type="Pfam" id="PF00155">
    <property type="entry name" value="Aminotran_1_2"/>
    <property type="match status" value="1"/>
</dbReference>
<dbReference type="SUPFAM" id="SSF53383">
    <property type="entry name" value="PLP-dependent transferases"/>
    <property type="match status" value="1"/>
</dbReference>
<dbReference type="PROSITE" id="PS00599">
    <property type="entry name" value="AA_TRANSFER_CLASS_2"/>
    <property type="match status" value="1"/>
</dbReference>
<organism>
    <name type="scientific">Chlorobium luteolum (strain DSM 273 / BCRC 81028 / 2530)</name>
    <name type="common">Pelodictyon luteolum</name>
    <dbReference type="NCBI Taxonomy" id="319225"/>
    <lineage>
        <taxon>Bacteria</taxon>
        <taxon>Pseudomonadati</taxon>
        <taxon>Chlorobiota</taxon>
        <taxon>Chlorobiia</taxon>
        <taxon>Chlorobiales</taxon>
        <taxon>Chlorobiaceae</taxon>
        <taxon>Chlorobium/Pelodictyon group</taxon>
        <taxon>Pelodictyon</taxon>
    </lineage>
</organism>
<name>HIS8_CHLL3</name>
<proteinExistence type="inferred from homology"/>